<proteinExistence type="inferred from homology"/>
<organism>
    <name type="scientific">Cellvibrio japonicus (strain Ueda107)</name>
    <name type="common">Pseudomonas fluorescens subsp. cellulosa</name>
    <dbReference type="NCBI Taxonomy" id="498211"/>
    <lineage>
        <taxon>Bacteria</taxon>
        <taxon>Pseudomonadati</taxon>
        <taxon>Pseudomonadota</taxon>
        <taxon>Gammaproteobacteria</taxon>
        <taxon>Cellvibrionales</taxon>
        <taxon>Cellvibrionaceae</taxon>
        <taxon>Cellvibrio</taxon>
    </lineage>
</organism>
<comment type="function">
    <text evidence="1">Catalyzes the transfer of endogenously produced octanoic acid from octanoyl-acyl-carrier-protein onto the lipoyl domains of lipoate-dependent enzymes. Lipoyl-ACP can also act as a substrate although octanoyl-ACP is likely to be the physiological substrate.</text>
</comment>
<comment type="catalytic activity">
    <reaction evidence="1">
        <text>octanoyl-[ACP] + L-lysyl-[protein] = N(6)-octanoyl-L-lysyl-[protein] + holo-[ACP] + H(+)</text>
        <dbReference type="Rhea" id="RHEA:17665"/>
        <dbReference type="Rhea" id="RHEA-COMP:9636"/>
        <dbReference type="Rhea" id="RHEA-COMP:9685"/>
        <dbReference type="Rhea" id="RHEA-COMP:9752"/>
        <dbReference type="Rhea" id="RHEA-COMP:9928"/>
        <dbReference type="ChEBI" id="CHEBI:15378"/>
        <dbReference type="ChEBI" id="CHEBI:29969"/>
        <dbReference type="ChEBI" id="CHEBI:64479"/>
        <dbReference type="ChEBI" id="CHEBI:78463"/>
        <dbReference type="ChEBI" id="CHEBI:78809"/>
        <dbReference type="EC" id="2.3.1.181"/>
    </reaction>
</comment>
<comment type="pathway">
    <text evidence="1">Protein modification; protein lipoylation via endogenous pathway; protein N(6)-(lipoyl)lysine from octanoyl-[acyl-carrier-protein]: step 1/2.</text>
</comment>
<comment type="subcellular location">
    <subcellularLocation>
        <location evidence="1">Cytoplasm</location>
    </subcellularLocation>
</comment>
<comment type="miscellaneous">
    <text evidence="1">In the reaction, the free carboxyl group of octanoic acid is attached via an amide linkage to the epsilon-amino group of a specific lysine residue of lipoyl domains of lipoate-dependent enzymes.</text>
</comment>
<comment type="similarity">
    <text evidence="1">Belongs to the LipB family.</text>
</comment>
<protein>
    <recommendedName>
        <fullName evidence="1">Octanoyltransferase</fullName>
        <ecNumber evidence="1">2.3.1.181</ecNumber>
    </recommendedName>
    <alternativeName>
        <fullName evidence="1">Lipoate-protein ligase B</fullName>
    </alternativeName>
    <alternativeName>
        <fullName evidence="1">Lipoyl/octanoyl transferase</fullName>
    </alternativeName>
    <alternativeName>
        <fullName evidence="1">Octanoyl-[acyl-carrier-protein]-protein N-octanoyltransferase</fullName>
    </alternativeName>
</protein>
<reference key="1">
    <citation type="journal article" date="2008" name="J. Bacteriol.">
        <title>Insights into plant cell wall degradation from the genome sequence of the soil bacterium Cellvibrio japonicus.</title>
        <authorList>
            <person name="DeBoy R.T."/>
            <person name="Mongodin E.F."/>
            <person name="Fouts D.E."/>
            <person name="Tailford L.E."/>
            <person name="Khouri H."/>
            <person name="Emerson J.B."/>
            <person name="Mohamoud Y."/>
            <person name="Watkins K."/>
            <person name="Henrissat B."/>
            <person name="Gilbert H.J."/>
            <person name="Nelson K.E."/>
        </authorList>
    </citation>
    <scope>NUCLEOTIDE SEQUENCE [LARGE SCALE GENOMIC DNA]</scope>
    <source>
        <strain>Ueda107</strain>
    </source>
</reference>
<evidence type="ECO:0000255" key="1">
    <source>
        <dbReference type="HAMAP-Rule" id="MF_00013"/>
    </source>
</evidence>
<evidence type="ECO:0000255" key="2">
    <source>
        <dbReference type="PROSITE-ProRule" id="PRU01067"/>
    </source>
</evidence>
<keyword id="KW-0012">Acyltransferase</keyword>
<keyword id="KW-0963">Cytoplasm</keyword>
<keyword id="KW-1185">Reference proteome</keyword>
<keyword id="KW-0808">Transferase</keyword>
<name>LIPB_CELJU</name>
<gene>
    <name evidence="1" type="primary">lipB</name>
    <name type="ordered locus">CJA_0796</name>
</gene>
<feature type="chain" id="PRO_1000089449" description="Octanoyltransferase">
    <location>
        <begin position="1"/>
        <end position="215"/>
    </location>
</feature>
<feature type="domain" description="BPL/LPL catalytic" evidence="2">
    <location>
        <begin position="33"/>
        <end position="209"/>
    </location>
</feature>
<feature type="active site" description="Acyl-thioester intermediate" evidence="1">
    <location>
        <position position="170"/>
    </location>
</feature>
<feature type="binding site" evidence="1">
    <location>
        <begin position="72"/>
        <end position="79"/>
    </location>
    <ligand>
        <name>substrate</name>
    </ligand>
</feature>
<feature type="binding site" evidence="1">
    <location>
        <begin position="139"/>
        <end position="141"/>
    </location>
    <ligand>
        <name>substrate</name>
    </ligand>
</feature>
<feature type="binding site" evidence="1">
    <location>
        <begin position="152"/>
        <end position="154"/>
    </location>
    <ligand>
        <name>substrate</name>
    </ligand>
</feature>
<feature type="site" description="Lowers pKa of active site Cys" evidence="1">
    <location>
        <position position="136"/>
    </location>
</feature>
<sequence length="215" mass="23976">MALLPLLDVINLGRQPYEQSWQAMTAFTNQRTPDTPDQLWLVEHPPVFTQGQAGKAEHLLFPGDIPVVQTDRGGQVTYHGPGQLVAYPLLDLRRLKMGVRDLVTAIEQTIVATLAEYGIESYPKPDAPGVYVENHKIASLGLRVRRGCSFHGLALNVDMDLSPFLRINPCGYQGLAMTQMRDLMPETPSLVQVQEQLVCQFARKLGYETCTMRAN</sequence>
<dbReference type="EC" id="2.3.1.181" evidence="1"/>
<dbReference type="EMBL" id="CP000934">
    <property type="protein sequence ID" value="ACE84492.1"/>
    <property type="molecule type" value="Genomic_DNA"/>
</dbReference>
<dbReference type="SMR" id="B3PKN9"/>
<dbReference type="STRING" id="498211.CJA_0796"/>
<dbReference type="KEGG" id="cja:CJA_0796"/>
<dbReference type="eggNOG" id="COG0321">
    <property type="taxonomic scope" value="Bacteria"/>
</dbReference>
<dbReference type="HOGENOM" id="CLU_035168_3_1_6"/>
<dbReference type="OrthoDB" id="9787061at2"/>
<dbReference type="UniPathway" id="UPA00538">
    <property type="reaction ID" value="UER00592"/>
</dbReference>
<dbReference type="Proteomes" id="UP000001036">
    <property type="component" value="Chromosome"/>
</dbReference>
<dbReference type="GO" id="GO:0005737">
    <property type="term" value="C:cytoplasm"/>
    <property type="evidence" value="ECO:0007669"/>
    <property type="project" value="UniProtKB-SubCell"/>
</dbReference>
<dbReference type="GO" id="GO:0033819">
    <property type="term" value="F:lipoyl(octanoyl) transferase activity"/>
    <property type="evidence" value="ECO:0007669"/>
    <property type="project" value="UniProtKB-EC"/>
</dbReference>
<dbReference type="GO" id="GO:0036211">
    <property type="term" value="P:protein modification process"/>
    <property type="evidence" value="ECO:0007669"/>
    <property type="project" value="InterPro"/>
</dbReference>
<dbReference type="CDD" id="cd16444">
    <property type="entry name" value="LipB"/>
    <property type="match status" value="1"/>
</dbReference>
<dbReference type="FunFam" id="3.30.930.10:FF:000020">
    <property type="entry name" value="Octanoyltransferase"/>
    <property type="match status" value="1"/>
</dbReference>
<dbReference type="Gene3D" id="3.30.930.10">
    <property type="entry name" value="Bira Bifunctional Protein, Domain 2"/>
    <property type="match status" value="1"/>
</dbReference>
<dbReference type="HAMAP" id="MF_00013">
    <property type="entry name" value="LipB"/>
    <property type="match status" value="1"/>
</dbReference>
<dbReference type="InterPro" id="IPR045864">
    <property type="entry name" value="aa-tRNA-synth_II/BPL/LPL"/>
</dbReference>
<dbReference type="InterPro" id="IPR004143">
    <property type="entry name" value="BPL_LPL_catalytic"/>
</dbReference>
<dbReference type="InterPro" id="IPR000544">
    <property type="entry name" value="Octanoyltransferase"/>
</dbReference>
<dbReference type="InterPro" id="IPR020605">
    <property type="entry name" value="Octanoyltransferase_CS"/>
</dbReference>
<dbReference type="NCBIfam" id="TIGR00214">
    <property type="entry name" value="lipB"/>
    <property type="match status" value="1"/>
</dbReference>
<dbReference type="NCBIfam" id="NF010922">
    <property type="entry name" value="PRK14342.1"/>
    <property type="match status" value="1"/>
</dbReference>
<dbReference type="PANTHER" id="PTHR10993:SF7">
    <property type="entry name" value="LIPOYLTRANSFERASE 2, MITOCHONDRIAL-RELATED"/>
    <property type="match status" value="1"/>
</dbReference>
<dbReference type="PANTHER" id="PTHR10993">
    <property type="entry name" value="OCTANOYLTRANSFERASE"/>
    <property type="match status" value="1"/>
</dbReference>
<dbReference type="Pfam" id="PF21948">
    <property type="entry name" value="LplA-B_cat"/>
    <property type="match status" value="1"/>
</dbReference>
<dbReference type="PIRSF" id="PIRSF016262">
    <property type="entry name" value="LPLase"/>
    <property type="match status" value="1"/>
</dbReference>
<dbReference type="SUPFAM" id="SSF55681">
    <property type="entry name" value="Class II aaRS and biotin synthetases"/>
    <property type="match status" value="1"/>
</dbReference>
<dbReference type="PROSITE" id="PS51733">
    <property type="entry name" value="BPL_LPL_CATALYTIC"/>
    <property type="match status" value="1"/>
</dbReference>
<dbReference type="PROSITE" id="PS01313">
    <property type="entry name" value="LIPB"/>
    <property type="match status" value="1"/>
</dbReference>
<accession>B3PKN9</accession>